<organism>
    <name type="scientific">Nitratidesulfovibrio vulgaris (strain DSM 19637 / Miyazaki F)</name>
    <name type="common">Desulfovibrio vulgaris</name>
    <dbReference type="NCBI Taxonomy" id="883"/>
    <lineage>
        <taxon>Bacteria</taxon>
        <taxon>Pseudomonadati</taxon>
        <taxon>Thermodesulfobacteriota</taxon>
        <taxon>Desulfovibrionia</taxon>
        <taxon>Desulfovibrionales</taxon>
        <taxon>Desulfovibrionaceae</taxon>
        <taxon>Nitratidesulfovibrio</taxon>
    </lineage>
</organism>
<proteinExistence type="inferred from homology"/>
<evidence type="ECO:0000255" key="1">
    <source>
        <dbReference type="HAMAP-Rule" id="MF_00086"/>
    </source>
</evidence>
<name>METK_NITV9</name>
<keyword id="KW-0067">ATP-binding</keyword>
<keyword id="KW-0963">Cytoplasm</keyword>
<keyword id="KW-0460">Magnesium</keyword>
<keyword id="KW-0479">Metal-binding</keyword>
<keyword id="KW-0547">Nucleotide-binding</keyword>
<keyword id="KW-0554">One-carbon metabolism</keyword>
<keyword id="KW-0630">Potassium</keyword>
<keyword id="KW-0808">Transferase</keyword>
<sequence>MIPGKGRYFFTSESVTEGHPDKVADQISDAVLDVLLAQDPMSRVACETLVTTGMAFIAGEIRTKGFADLPEVVRSTIRNIGYNSSEMGFDWKTCAVISSIDKQSGDIAQGVDRGNPEDQGAGDQGMMFGFACDETPTLMPAPIYWAHQLSQRLTQVRKDGILDFLRPDGKTQVSFEYVDGKPVHINNVVVSSQHADNVSNDTIREGIIEEVIRKTLPEGLMADDCEIFINTTGRFVIGGPMGDCGLTGRKIIQDTYGGAGHHGGGAFSGKDASKVDRSGAYMGRYIAKNVVKAGLAPKCEVQIAYCIGVAEPVSVLVSSLGSSELSDEVLTRAVREVFDLRPYHIIKRLDLNRPIYGKTTCYGHFGRELPEFTWEQCDAVADLRTAAKI</sequence>
<dbReference type="EC" id="2.5.1.6" evidence="1"/>
<dbReference type="EMBL" id="CP001197">
    <property type="protein sequence ID" value="ACL09878.1"/>
    <property type="molecule type" value="Genomic_DNA"/>
</dbReference>
<dbReference type="SMR" id="B8DSC3"/>
<dbReference type="STRING" id="883.DvMF_2941"/>
<dbReference type="KEGG" id="dvm:DvMF_2941"/>
<dbReference type="eggNOG" id="COG0192">
    <property type="taxonomic scope" value="Bacteria"/>
</dbReference>
<dbReference type="HOGENOM" id="CLU_041802_1_1_7"/>
<dbReference type="OrthoDB" id="9801686at2"/>
<dbReference type="UniPathway" id="UPA00315">
    <property type="reaction ID" value="UER00080"/>
</dbReference>
<dbReference type="GO" id="GO:0005737">
    <property type="term" value="C:cytoplasm"/>
    <property type="evidence" value="ECO:0007669"/>
    <property type="project" value="UniProtKB-SubCell"/>
</dbReference>
<dbReference type="GO" id="GO:0005524">
    <property type="term" value="F:ATP binding"/>
    <property type="evidence" value="ECO:0007669"/>
    <property type="project" value="UniProtKB-UniRule"/>
</dbReference>
<dbReference type="GO" id="GO:0000287">
    <property type="term" value="F:magnesium ion binding"/>
    <property type="evidence" value="ECO:0007669"/>
    <property type="project" value="UniProtKB-UniRule"/>
</dbReference>
<dbReference type="GO" id="GO:0004478">
    <property type="term" value="F:methionine adenosyltransferase activity"/>
    <property type="evidence" value="ECO:0007669"/>
    <property type="project" value="UniProtKB-UniRule"/>
</dbReference>
<dbReference type="GO" id="GO:0006730">
    <property type="term" value="P:one-carbon metabolic process"/>
    <property type="evidence" value="ECO:0007669"/>
    <property type="project" value="UniProtKB-KW"/>
</dbReference>
<dbReference type="GO" id="GO:0006556">
    <property type="term" value="P:S-adenosylmethionine biosynthetic process"/>
    <property type="evidence" value="ECO:0007669"/>
    <property type="project" value="UniProtKB-UniRule"/>
</dbReference>
<dbReference type="CDD" id="cd18079">
    <property type="entry name" value="S-AdoMet_synt"/>
    <property type="match status" value="1"/>
</dbReference>
<dbReference type="FunFam" id="3.30.300.10:FF:000003">
    <property type="entry name" value="S-adenosylmethionine synthase"/>
    <property type="match status" value="1"/>
</dbReference>
<dbReference type="Gene3D" id="3.30.300.10">
    <property type="match status" value="3"/>
</dbReference>
<dbReference type="HAMAP" id="MF_00086">
    <property type="entry name" value="S_AdoMet_synth1"/>
    <property type="match status" value="1"/>
</dbReference>
<dbReference type="InterPro" id="IPR022631">
    <property type="entry name" value="ADOMET_SYNTHASE_CS"/>
</dbReference>
<dbReference type="InterPro" id="IPR022630">
    <property type="entry name" value="S-AdoMet_synt_C"/>
</dbReference>
<dbReference type="InterPro" id="IPR022629">
    <property type="entry name" value="S-AdoMet_synt_central"/>
</dbReference>
<dbReference type="InterPro" id="IPR022628">
    <property type="entry name" value="S-AdoMet_synt_N"/>
</dbReference>
<dbReference type="InterPro" id="IPR002133">
    <property type="entry name" value="S-AdoMet_synthetase"/>
</dbReference>
<dbReference type="InterPro" id="IPR022636">
    <property type="entry name" value="S-AdoMet_synthetase_sfam"/>
</dbReference>
<dbReference type="NCBIfam" id="TIGR01034">
    <property type="entry name" value="metK"/>
    <property type="match status" value="1"/>
</dbReference>
<dbReference type="PANTHER" id="PTHR11964">
    <property type="entry name" value="S-ADENOSYLMETHIONINE SYNTHETASE"/>
    <property type="match status" value="1"/>
</dbReference>
<dbReference type="Pfam" id="PF02773">
    <property type="entry name" value="S-AdoMet_synt_C"/>
    <property type="match status" value="1"/>
</dbReference>
<dbReference type="Pfam" id="PF02772">
    <property type="entry name" value="S-AdoMet_synt_M"/>
    <property type="match status" value="1"/>
</dbReference>
<dbReference type="Pfam" id="PF00438">
    <property type="entry name" value="S-AdoMet_synt_N"/>
    <property type="match status" value="1"/>
</dbReference>
<dbReference type="PIRSF" id="PIRSF000497">
    <property type="entry name" value="MAT"/>
    <property type="match status" value="1"/>
</dbReference>
<dbReference type="SUPFAM" id="SSF55973">
    <property type="entry name" value="S-adenosylmethionine synthetase"/>
    <property type="match status" value="3"/>
</dbReference>
<dbReference type="PROSITE" id="PS00376">
    <property type="entry name" value="ADOMET_SYNTHASE_1"/>
    <property type="match status" value="1"/>
</dbReference>
<dbReference type="PROSITE" id="PS00377">
    <property type="entry name" value="ADOMET_SYNTHASE_2"/>
    <property type="match status" value="1"/>
</dbReference>
<comment type="function">
    <text evidence="1">Catalyzes the formation of S-adenosylmethionine (AdoMet) from methionine and ATP. The overall synthetic reaction is composed of two sequential steps, AdoMet formation and the subsequent tripolyphosphate hydrolysis which occurs prior to release of AdoMet from the enzyme.</text>
</comment>
<comment type="catalytic activity">
    <reaction evidence="1">
        <text>L-methionine + ATP + H2O = S-adenosyl-L-methionine + phosphate + diphosphate</text>
        <dbReference type="Rhea" id="RHEA:21080"/>
        <dbReference type="ChEBI" id="CHEBI:15377"/>
        <dbReference type="ChEBI" id="CHEBI:30616"/>
        <dbReference type="ChEBI" id="CHEBI:33019"/>
        <dbReference type="ChEBI" id="CHEBI:43474"/>
        <dbReference type="ChEBI" id="CHEBI:57844"/>
        <dbReference type="ChEBI" id="CHEBI:59789"/>
        <dbReference type="EC" id="2.5.1.6"/>
    </reaction>
</comment>
<comment type="cofactor">
    <cofactor evidence="1">
        <name>Mg(2+)</name>
        <dbReference type="ChEBI" id="CHEBI:18420"/>
    </cofactor>
    <text evidence="1">Binds 2 divalent ions per subunit.</text>
</comment>
<comment type="cofactor">
    <cofactor evidence="1">
        <name>K(+)</name>
        <dbReference type="ChEBI" id="CHEBI:29103"/>
    </cofactor>
    <text evidence="1">Binds 1 potassium ion per subunit.</text>
</comment>
<comment type="pathway">
    <text evidence="1">Amino-acid biosynthesis; S-adenosyl-L-methionine biosynthesis; S-adenosyl-L-methionine from L-methionine: step 1/1.</text>
</comment>
<comment type="subunit">
    <text evidence="1">Homotetramer; dimer of dimers.</text>
</comment>
<comment type="subcellular location">
    <subcellularLocation>
        <location evidence="1">Cytoplasm</location>
    </subcellularLocation>
</comment>
<comment type="similarity">
    <text evidence="1">Belongs to the AdoMet synthase family.</text>
</comment>
<protein>
    <recommendedName>
        <fullName evidence="1">S-adenosylmethionine synthase</fullName>
        <shortName evidence="1">AdoMet synthase</shortName>
        <ecNumber evidence="1">2.5.1.6</ecNumber>
    </recommendedName>
    <alternativeName>
        <fullName evidence="1">MAT</fullName>
    </alternativeName>
    <alternativeName>
        <fullName evidence="1">Methionine adenosyltransferase</fullName>
    </alternativeName>
</protein>
<accession>B8DSC3</accession>
<reference key="1">
    <citation type="submission" date="2008-10" db="EMBL/GenBank/DDBJ databases">
        <title>Complete sequence of Desulfovibrio vulgaris str. 'Miyazaki F'.</title>
        <authorList>
            <person name="Lucas S."/>
            <person name="Copeland A."/>
            <person name="Lapidus A."/>
            <person name="Glavina del Rio T."/>
            <person name="Dalin E."/>
            <person name="Tice H."/>
            <person name="Bruce D."/>
            <person name="Goodwin L."/>
            <person name="Pitluck S."/>
            <person name="Sims D."/>
            <person name="Brettin T."/>
            <person name="Detter J.C."/>
            <person name="Han C."/>
            <person name="Larimer F."/>
            <person name="Land M."/>
            <person name="Hauser L."/>
            <person name="Kyrpides N."/>
            <person name="Mikhailova N."/>
            <person name="Hazen T.C."/>
            <person name="Richardson P."/>
        </authorList>
    </citation>
    <scope>NUCLEOTIDE SEQUENCE [LARGE SCALE GENOMIC DNA]</scope>
    <source>
        <strain>DSM 19637 / Miyazaki F</strain>
    </source>
</reference>
<feature type="chain" id="PRO_1000196705" description="S-adenosylmethionine synthase">
    <location>
        <begin position="1"/>
        <end position="389"/>
    </location>
</feature>
<feature type="region of interest" description="Flexible loop" evidence="1">
    <location>
        <begin position="103"/>
        <end position="113"/>
    </location>
</feature>
<feature type="binding site" description="in other chain" evidence="1">
    <location>
        <position position="19"/>
    </location>
    <ligand>
        <name>ATP</name>
        <dbReference type="ChEBI" id="CHEBI:30616"/>
        <note>ligand shared between two neighboring subunits</note>
    </ligand>
</feature>
<feature type="binding site" evidence="1">
    <location>
        <position position="21"/>
    </location>
    <ligand>
        <name>Mg(2+)</name>
        <dbReference type="ChEBI" id="CHEBI:18420"/>
    </ligand>
</feature>
<feature type="binding site" evidence="1">
    <location>
        <position position="47"/>
    </location>
    <ligand>
        <name>K(+)</name>
        <dbReference type="ChEBI" id="CHEBI:29103"/>
    </ligand>
</feature>
<feature type="binding site" description="in other chain" evidence="1">
    <location>
        <position position="60"/>
    </location>
    <ligand>
        <name>L-methionine</name>
        <dbReference type="ChEBI" id="CHEBI:57844"/>
        <note>ligand shared between two neighboring subunits</note>
    </ligand>
</feature>
<feature type="binding site" description="in other chain" evidence="1">
    <location>
        <position position="103"/>
    </location>
    <ligand>
        <name>L-methionine</name>
        <dbReference type="ChEBI" id="CHEBI:57844"/>
        <note>ligand shared between two neighboring subunits</note>
    </ligand>
</feature>
<feature type="binding site" description="in other chain" evidence="1">
    <location>
        <begin position="168"/>
        <end position="170"/>
    </location>
    <ligand>
        <name>ATP</name>
        <dbReference type="ChEBI" id="CHEBI:30616"/>
        <note>ligand shared between two neighboring subunits</note>
    </ligand>
</feature>
<feature type="binding site" description="in other chain" evidence="1">
    <location>
        <begin position="234"/>
        <end position="235"/>
    </location>
    <ligand>
        <name>ATP</name>
        <dbReference type="ChEBI" id="CHEBI:30616"/>
        <note>ligand shared between two neighboring subunits</note>
    </ligand>
</feature>
<feature type="binding site" evidence="1">
    <location>
        <position position="243"/>
    </location>
    <ligand>
        <name>ATP</name>
        <dbReference type="ChEBI" id="CHEBI:30616"/>
        <note>ligand shared between two neighboring subunits</note>
    </ligand>
</feature>
<feature type="binding site" evidence="1">
    <location>
        <position position="243"/>
    </location>
    <ligand>
        <name>L-methionine</name>
        <dbReference type="ChEBI" id="CHEBI:57844"/>
        <note>ligand shared between two neighboring subunits</note>
    </ligand>
</feature>
<feature type="binding site" description="in other chain" evidence="1">
    <location>
        <begin position="249"/>
        <end position="250"/>
    </location>
    <ligand>
        <name>ATP</name>
        <dbReference type="ChEBI" id="CHEBI:30616"/>
        <note>ligand shared between two neighboring subunits</note>
    </ligand>
</feature>
<feature type="binding site" evidence="1">
    <location>
        <position position="266"/>
    </location>
    <ligand>
        <name>ATP</name>
        <dbReference type="ChEBI" id="CHEBI:30616"/>
        <note>ligand shared between two neighboring subunits</note>
    </ligand>
</feature>
<feature type="binding site" evidence="1">
    <location>
        <position position="270"/>
    </location>
    <ligand>
        <name>ATP</name>
        <dbReference type="ChEBI" id="CHEBI:30616"/>
        <note>ligand shared between two neighboring subunits</note>
    </ligand>
</feature>
<feature type="binding site" description="in other chain" evidence="1">
    <location>
        <position position="274"/>
    </location>
    <ligand>
        <name>L-methionine</name>
        <dbReference type="ChEBI" id="CHEBI:57844"/>
        <note>ligand shared between two neighboring subunits</note>
    </ligand>
</feature>
<gene>
    <name evidence="1" type="primary">metK</name>
    <name type="ordered locus">DvMF_2941</name>
</gene>